<sequence>MHRSLSLRAVVCLSTLLPASLLYAAPDVDIETLKQELLELKQRYEAQQKALAVLEQRVRQVEDQPATPAPKRLAKSPADFKQSGSTVAASSGTGGATGGSSYGQSLKDDSEPAQSVSNLYNEASGFFGNGKFSFETGITYARYDARQLTLNGFLALDSIFLGNINLDRIKADNWTLDLTGRYNLDNRWQFDVNVPVVYRESTYQSGGASGGDPQATSEESVSRDPTIGDVNFGIAYKFLDESATMPDAVVSVRVKAPTGKEPFGIKLVRSTANDNLYVPESLPTGNGVWSITPGLSLVKTFDPAVLFGSVSYTHNLEDSFDDISSDVNQKVGGKVRLGDSFQFGVGVAFALNERMSMSFSVSDLIQRKSKLKPDGGGWQSIVSSDANAGYFNVGMTIAASENLTIVPNLAIGMTDDAPDFTFSLKFPYYF</sequence>
<organism>
    <name type="scientific">Pseudomonas fluorescens</name>
    <dbReference type="NCBI Taxonomy" id="294"/>
    <lineage>
        <taxon>Bacteria</taxon>
        <taxon>Pseudomonadati</taxon>
        <taxon>Pseudomonadota</taxon>
        <taxon>Gammaproteobacteria</taxon>
        <taxon>Pseudomonadales</taxon>
        <taxon>Pseudomonadaceae</taxon>
        <taxon>Pseudomonas</taxon>
    </lineage>
</organism>
<dbReference type="EMBL" id="ACOQ01000001">
    <property type="protein sequence ID" value="EEP64554.1"/>
    <property type="molecule type" value="Genomic_DNA"/>
</dbReference>
<dbReference type="EMBL" id="CP008896">
    <property type="protein sequence ID" value="AIG01394.1"/>
    <property type="molecule type" value="Genomic_DNA"/>
</dbReference>
<dbReference type="RefSeq" id="WP_008603564.1">
    <property type="nucleotide sequence ID" value="NZ_CP008896.1"/>
</dbReference>
<dbReference type="PDB" id="5O65">
    <property type="method" value="X-ray"/>
    <property type="resolution" value="2.50 A"/>
    <property type="chains" value="A/B/C=112-430"/>
</dbReference>
<dbReference type="PDB" id="5O67">
    <property type="method" value="X-ray"/>
    <property type="resolution" value="2.84 A"/>
    <property type="chains" value="A/B/C=112-430"/>
</dbReference>
<dbReference type="PDB" id="5O68">
    <property type="method" value="X-ray"/>
    <property type="resolution" value="3.08 A"/>
    <property type="chains" value="A/B/C/D/E/F/G/H/I/J/K/L=112-430"/>
</dbReference>
<dbReference type="PDB" id="6FUE">
    <property type="method" value="X-ray"/>
    <property type="resolution" value="1.78 A"/>
    <property type="chains" value="A/B/C/D/E/F=27-64"/>
</dbReference>
<dbReference type="PDBsum" id="5O65"/>
<dbReference type="PDBsum" id="5O67"/>
<dbReference type="PDBsum" id="5O68"/>
<dbReference type="PDBsum" id="6FUE"/>
<dbReference type="SMR" id="P0DXF8"/>
<dbReference type="KEGG" id="pfn:HZ99_04105"/>
<dbReference type="GO" id="GO:0009279">
    <property type="term" value="C:cell outer membrane"/>
    <property type="evidence" value="ECO:0007669"/>
    <property type="project" value="UniProtKB-SubCell"/>
</dbReference>
<dbReference type="GO" id="GO:0015031">
    <property type="term" value="P:protein transport"/>
    <property type="evidence" value="ECO:0007669"/>
    <property type="project" value="UniProtKB-KW"/>
</dbReference>
<dbReference type="InterPro" id="IPR036709">
    <property type="entry name" value="Autotransporte_beta_dom_sf"/>
</dbReference>
<dbReference type="SUPFAM" id="SSF103515">
    <property type="entry name" value="Autotransporter"/>
    <property type="match status" value="1"/>
</dbReference>
<dbReference type="SUPFAM" id="SSF56935">
    <property type="entry name" value="Porins"/>
    <property type="match status" value="1"/>
</dbReference>
<feature type="signal peptide" evidence="1">
    <location>
        <begin position="1"/>
        <end position="24"/>
    </location>
</feature>
<feature type="chain" id="PRO_0000461518" description="Functional amyloid transporter FapF" evidence="1">
    <location>
        <begin position="25"/>
        <end position="430"/>
    </location>
</feature>
<feature type="topological domain" description="Periplasmic" evidence="6">
    <location>
        <begin position="25"/>
        <end position="131"/>
    </location>
</feature>
<feature type="transmembrane region" description="Beta stranded" evidence="15 16 17">
    <location>
        <begin position="132"/>
        <end position="142"/>
    </location>
</feature>
<feature type="topological domain" description="Extracellular" evidence="11">
    <location>
        <begin position="143"/>
        <end position="172"/>
    </location>
</feature>
<feature type="transmembrane region" description="Beta stranded" evidence="15 16 17">
    <location>
        <begin position="173"/>
        <end position="183"/>
    </location>
</feature>
<feature type="topological domain" description="Periplasmic" evidence="11">
    <location>
        <begin position="184"/>
        <end position="189"/>
    </location>
</feature>
<feature type="transmembrane region" description="Beta stranded" evidence="15 16 17">
    <location>
        <begin position="190"/>
        <end position="198"/>
    </location>
</feature>
<feature type="topological domain" description="Extracellular" evidence="11">
    <location>
        <begin position="199"/>
        <end position="224"/>
    </location>
</feature>
<feature type="transmembrane region" description="Beta stranded" evidence="15 16 17">
    <location>
        <begin position="225"/>
        <end position="238"/>
    </location>
</feature>
<feature type="topological domain" description="Periplasmic" evidence="11">
    <location>
        <begin position="239"/>
        <end position="246"/>
    </location>
</feature>
<feature type="transmembrane region" description="Beta stranded" evidence="15 16 17">
    <location>
        <begin position="247"/>
        <end position="256"/>
    </location>
</feature>
<feature type="topological domain" description="Extracellular" evidence="11">
    <location>
        <begin position="257"/>
        <end position="288"/>
    </location>
</feature>
<feature type="transmembrane region" description="Beta stranded" evidence="15 16 17">
    <location>
        <begin position="289"/>
        <end position="298"/>
    </location>
</feature>
<feature type="topological domain" description="Periplasmic" evidence="11">
    <location>
        <begin position="299"/>
        <end position="304"/>
    </location>
</feature>
<feature type="transmembrane region" description="Beta stranded" evidence="15 16 17">
    <location>
        <begin position="305"/>
        <end position="314"/>
    </location>
</feature>
<feature type="topological domain" description="Extracellular" evidence="11">
    <location>
        <begin position="315"/>
        <end position="339"/>
    </location>
</feature>
<feature type="transmembrane region" description="Beta stranded" evidence="15 16 17">
    <location>
        <begin position="340"/>
        <end position="348"/>
    </location>
</feature>
<feature type="topological domain" description="Periplasmic" evidence="11">
    <location>
        <begin position="349"/>
        <end position="356"/>
    </location>
</feature>
<feature type="transmembrane region" description="Beta stranded" evidence="15 16 17">
    <location>
        <begin position="357"/>
        <end position="365"/>
    </location>
</feature>
<feature type="topological domain" description="Extracellular" evidence="11">
    <location>
        <begin position="366"/>
        <end position="386"/>
    </location>
</feature>
<feature type="transmembrane region" description="Beta stranded" evidence="15 16 17">
    <location>
        <begin position="387"/>
        <end position="397"/>
    </location>
</feature>
<feature type="topological domain" description="Periplasmic" evidence="11">
    <location>
        <begin position="398"/>
        <end position="404"/>
    </location>
</feature>
<feature type="transmembrane region" description="Beta stranded" evidence="15 16 17">
    <location>
        <begin position="405"/>
        <end position="412"/>
    </location>
</feature>
<feature type="topological domain" description="Extracellular" evidence="11">
    <location>
        <begin position="413"/>
        <end position="419"/>
    </location>
</feature>
<feature type="transmembrane region" description="Beta stranded" evidence="15 16 17">
    <location>
        <begin position="420"/>
        <end position="428"/>
    </location>
</feature>
<feature type="topological domain" description="Periplasmic" evidence="11">
    <location>
        <begin position="429"/>
        <end position="430"/>
    </location>
</feature>
<feature type="region of interest" description="Disordered" evidence="2">
    <location>
        <begin position="62"/>
        <end position="114"/>
    </location>
</feature>
<feature type="region of interest" description="Alpha helical plug">
    <location>
        <begin position="113"/>
        <end position="125"/>
    </location>
</feature>
<feature type="region of interest" description="Disordered" evidence="2">
    <location>
        <begin position="203"/>
        <end position="223"/>
    </location>
</feature>
<feature type="coiled-coil region" evidence="13 14">
    <location>
        <begin position="29"/>
        <end position="64"/>
    </location>
</feature>
<feature type="compositionally biased region" description="Gly residues" evidence="2">
    <location>
        <begin position="92"/>
        <end position="101"/>
    </location>
</feature>
<feature type="site" description="Forms salt bridge with Lys-425" evidence="6">
    <location>
        <position position="122"/>
    </location>
</feature>
<feature type="site" description="Forms salt bridge with Glu-122" evidence="6">
    <location>
        <position position="425"/>
    </location>
</feature>
<feature type="mutagenesis site" description="No change in trimerization of the isolated coiled coil fragment." evidence="7">
    <original>Y</original>
    <variation>A</variation>
    <location>
        <position position="44"/>
    </location>
</feature>
<feature type="mutagenesis site" description="Reduced trimerization of the isolated coiled coil fragment." evidence="7">
    <original>R</original>
    <variation>A</variation>
    <variation>E</variation>
    <location>
        <position position="57"/>
    </location>
</feature>
<feature type="mutagenesis site" description="Loss of salt bridge, no longer secretes FapC across the outer membrane." evidence="6">
    <original>E</original>
    <variation>A</variation>
    <location>
        <position position="122"/>
    </location>
</feature>
<feature type="mutagenesis site" description="No longer secretes FapC across the outer membrane." evidence="6">
    <original>F</original>
    <variation>A</variation>
    <location>
        <position position="126"/>
    </location>
</feature>
<feature type="mutagenesis site" description="Allows secretion of FapC across the outer membrane." evidence="6">
    <original>F</original>
    <variation>A</variation>
    <location>
        <position position="127"/>
    </location>
</feature>
<feature type="mutagenesis site" description="Allows secretion of FapC across the outer membrane; when associated with E-181." evidence="6">
    <original>E</original>
    <variation>R</variation>
    <location>
        <position position="135"/>
    </location>
</feature>
<feature type="mutagenesis site" description="No longer secretes FapC across the outer membrane, trimer formation is altered." evidence="6">
    <original>R</original>
    <variation>A</variation>
    <location>
        <position position="181"/>
    </location>
</feature>
<feature type="mutagenesis site" description="Allows secretion of FapC across the outer membrane; when associated with R-135." evidence="6">
    <original>R</original>
    <variation>E</variation>
    <location>
        <position position="181"/>
    </location>
</feature>
<feature type="mutagenesis site" description="Allows secretion of FapC across the outer membrane." evidence="6">
    <original>PTG</original>
    <variation>AAA</variation>
    <location>
        <begin position="257"/>
        <end position="259"/>
    </location>
</feature>
<feature type="mutagenesis site" description="No longer inserts stably into outer membrane." evidence="6">
    <original>FALNERMSMSF</original>
    <variation>IALNERMSMSI</variation>
    <location>
        <begin position="349"/>
        <end position="359"/>
    </location>
</feature>
<feature type="mutagenesis site" description="Loss of salt bridge, no longer secretes FapC across the outer membrane." evidence="6">
    <original>K</original>
    <variation>A</variation>
    <location>
        <position position="425"/>
    </location>
</feature>
<feature type="helix" evidence="22">
    <location>
        <begin position="30"/>
        <end position="62"/>
    </location>
</feature>
<feature type="helix" evidence="19">
    <location>
        <begin position="114"/>
        <end position="124"/>
    </location>
</feature>
<feature type="strand" evidence="19">
    <location>
        <begin position="130"/>
        <end position="143"/>
    </location>
</feature>
<feature type="strand" evidence="19">
    <location>
        <begin position="168"/>
        <end position="184"/>
    </location>
</feature>
<feature type="turn" evidence="19">
    <location>
        <begin position="185"/>
        <end position="187"/>
    </location>
</feature>
<feature type="strand" evidence="19">
    <location>
        <begin position="188"/>
        <end position="204"/>
    </location>
</feature>
<feature type="turn" evidence="19">
    <location>
        <begin position="209"/>
        <end position="211"/>
    </location>
</feature>
<feature type="strand" evidence="19">
    <location>
        <begin position="213"/>
        <end position="215"/>
    </location>
</feature>
<feature type="strand" evidence="19">
    <location>
        <begin position="219"/>
        <end position="227"/>
    </location>
</feature>
<feature type="strand" evidence="19">
    <location>
        <begin position="231"/>
        <end position="239"/>
    </location>
</feature>
<feature type="strand" evidence="20">
    <location>
        <begin position="243"/>
        <end position="245"/>
    </location>
</feature>
<feature type="strand" evidence="19">
    <location>
        <begin position="247"/>
        <end position="255"/>
    </location>
</feature>
<feature type="strand" evidence="20">
    <location>
        <begin position="267"/>
        <end position="281"/>
    </location>
</feature>
<feature type="strand" evidence="19">
    <location>
        <begin position="290"/>
        <end position="301"/>
    </location>
</feature>
<feature type="strand" evidence="19">
    <location>
        <begin position="304"/>
        <end position="315"/>
    </location>
</feature>
<feature type="strand" evidence="19">
    <location>
        <begin position="318"/>
        <end position="321"/>
    </location>
</feature>
<feature type="strand" evidence="21">
    <location>
        <begin position="326"/>
        <end position="328"/>
    </location>
</feature>
<feature type="strand" evidence="19">
    <location>
        <begin position="333"/>
        <end position="336"/>
    </location>
</feature>
<feature type="strand" evidence="19">
    <location>
        <begin position="340"/>
        <end position="350"/>
    </location>
</feature>
<feature type="strand" evidence="19">
    <location>
        <begin position="352"/>
        <end position="366"/>
    </location>
</feature>
<feature type="strand" evidence="19">
    <location>
        <begin position="369"/>
        <end position="373"/>
    </location>
</feature>
<feature type="strand" evidence="19">
    <location>
        <begin position="379"/>
        <end position="381"/>
    </location>
</feature>
<feature type="strand" evidence="19">
    <location>
        <begin position="386"/>
        <end position="412"/>
    </location>
</feature>
<feature type="strand" evidence="21">
    <location>
        <begin position="414"/>
        <end position="417"/>
    </location>
</feature>
<feature type="strand" evidence="19">
    <location>
        <begin position="419"/>
        <end position="429"/>
    </location>
</feature>
<evidence type="ECO:0000255" key="1"/>
<evidence type="ECO:0000256" key="2">
    <source>
        <dbReference type="SAM" id="MobiDB-lite"/>
    </source>
</evidence>
<evidence type="ECO:0000269" key="3">
    <source>
    </source>
</evidence>
<evidence type="ECO:0000269" key="4">
    <source>
    </source>
</evidence>
<evidence type="ECO:0000269" key="5">
    <source>
    </source>
</evidence>
<evidence type="ECO:0000269" key="6">
    <source>
    </source>
</evidence>
<evidence type="ECO:0000269" key="7">
    <source>
    </source>
</evidence>
<evidence type="ECO:0000303" key="8">
    <source>
    </source>
</evidence>
<evidence type="ECO:0000303" key="9">
    <source>
    </source>
</evidence>
<evidence type="ECO:0000303" key="10">
    <source>
    </source>
</evidence>
<evidence type="ECO:0000305" key="11"/>
<evidence type="ECO:0000305" key="12">
    <source>
    </source>
</evidence>
<evidence type="ECO:0000305" key="13">
    <source>
    </source>
</evidence>
<evidence type="ECO:0000305" key="14">
    <source>
    </source>
</evidence>
<evidence type="ECO:0000312" key="15">
    <source>
        <dbReference type="PDB" id="5O65"/>
    </source>
</evidence>
<evidence type="ECO:0000312" key="16">
    <source>
        <dbReference type="PDB" id="5O67"/>
    </source>
</evidence>
<evidence type="ECO:0000312" key="17">
    <source>
        <dbReference type="PDB" id="5O68"/>
    </source>
</evidence>
<evidence type="ECO:0000312" key="18">
    <source>
        <dbReference type="PDB" id="6FUE"/>
    </source>
</evidence>
<evidence type="ECO:0007829" key="19">
    <source>
        <dbReference type="PDB" id="5O65"/>
    </source>
</evidence>
<evidence type="ECO:0007829" key="20">
    <source>
        <dbReference type="PDB" id="5O67"/>
    </source>
</evidence>
<evidence type="ECO:0007829" key="21">
    <source>
        <dbReference type="PDB" id="5O68"/>
    </source>
</evidence>
<evidence type="ECO:0007829" key="22">
    <source>
        <dbReference type="PDB" id="6FUE"/>
    </source>
</evidence>
<protein>
    <recommendedName>
        <fullName evidence="10">Functional amyloid transporter FapF</fullName>
    </recommendedName>
</protein>
<gene>
    <name evidence="8" type="primary">fapF</name>
    <name evidence="9" type="ORF">HZ99_04105</name>
    <name evidence="8" type="ORF">PSUK4_00060</name>
</gene>
<comment type="function">
    <text evidence="3 4 5 6">Transports fibril components across the outer membrane (PubMed:23504942, PubMed:28811582). Upon overexpression of the endogenous six-gene locus (fapA-fapF) in situ cells form large clumps during liquid growth, make large amounts of biofilm and produce amyloid fibrils (PubMed:23504942, PubMed:26500638). Expression of the 6 gene operon in E.coli strain BL21(DE3) induces flocculation and biofilm formation with copious extracellular fibrils (PubMed:20572935, PubMed:28811582).</text>
</comment>
<comment type="subunit">
    <text evidence="6">Homotrimer.</text>
</comment>
<comment type="subcellular location">
    <subcellularLocation>
        <location evidence="6 12">Cell outer membrane</location>
        <topology evidence="6">Multi-pass membrane protein</topology>
    </subcellularLocation>
    <text evidence="6">Secreted through the inner membrane by the Sec pathway.</text>
</comment>
<comment type="domain">
    <text evidence="6 7 13">An asymmetric coiled coil domain that trimerizes in the absence of the rest of the protein is found just after the signal peptide (PubMed:28811582, PubMed:29886016). The periplasmic N-terminal domain (residues 25-106) is required to secrete FapC across the outer membrane (PubMed:28811582). The crystal structure of the transmembrane domain (residues 107-430) is a 12-stranded beta barrel that is plugged from the periplasmic side by a 13-residue helical plug; the plug is pinned to the beta barrel lumen by a salt bridge between Glu-122 and Lys-425 (PubMed:28811582). Single channel gating indicates the beta barrels may be unplugged in full-length mature protein (Probable) (PubMed:28811582). The trimer interface is stabilized by a Phe ladder between the 3 monomers composed of Phe-349, Phe-359 and Phe-391 (PubMed:28811582).</text>
</comment>
<comment type="disruption phenotype">
    <text evidence="4 5 6">Deletion of just fapF in an overexpressing strain yields cells without amyloid fibrils (PubMed:26500638, PubMed:28811582). Deletion of the entire fapA-fapF six-gene locus shows no visible growth phenotype (PubMed:23504942, PubMed:26500638).</text>
</comment>
<comment type="similarity">
    <text evidence="11">Belongs to the amyloid transporter (TC 9.B.153) family.</text>
</comment>
<reference key="1">
    <citation type="journal article" date="2010" name="Mol. Microbiol.">
        <title>Functional amyloid in Pseudomonas.</title>
        <authorList>
            <person name="Dueholm M.S."/>
            <person name="Petersen S.V."/>
            <person name="Soenderkaer M."/>
            <person name="Larsen P."/>
            <person name="Christiansen G."/>
            <person name="Hein K.L."/>
            <person name="Enghild J.J."/>
            <person name="Nielsen J.L."/>
            <person name="Nielsen K.L."/>
            <person name="Nielsen P.H."/>
            <person name="Otzen D.E."/>
        </authorList>
    </citation>
    <scope>NUCLEOTIDE SEQUENCE [GENOMIC DNA]</scope>
    <scope>FUNCTION</scope>
    <source>
        <strain>DSM 29051 / UK4</strain>
    </source>
</reference>
<reference key="2">
    <citation type="journal article" date="2014" name="Genome Announc.">
        <title>Complete Genome Sequence of Pseudomonas sp. UK4, a Model Organism for Studies of Functional Amyloids in Pseudomonas.</title>
        <authorList>
            <person name="Dueholm M.S."/>
            <person name="Danielsen H.N."/>
            <person name="Nielsen P.H."/>
        </authorList>
    </citation>
    <scope>NUCLEOTIDE SEQUENCE [LARGE SCALE GENOMIC DNA]</scope>
    <source>
        <strain>DSM 29051 / UK4</strain>
    </source>
</reference>
<reference evidence="15 16 17" key="3">
    <citation type="journal article" date="2017" name="Nat. Commun.">
        <title>A new class of hybrid secretion system is employed in Pseudomonas amyloid biogenesis.</title>
        <authorList>
            <person name="Rouse S.L."/>
            <person name="Hawthorne W.J."/>
            <person name="Berry J.L."/>
            <person name="Chorev D.S."/>
            <person name="Ionescu S.A."/>
            <person name="Lambert S."/>
            <person name="Stylianou F."/>
            <person name="Ewert W."/>
            <person name="Mackie U."/>
            <person name="Morgan R.M.L."/>
            <person name="Otzen D."/>
            <person name="Herbst F.A."/>
            <person name="Nielsen P.H."/>
            <person name="Dueholm M."/>
            <person name="Bayley H."/>
            <person name="Robinson C.V."/>
            <person name="Hare S."/>
            <person name="Matthews S."/>
        </authorList>
    </citation>
    <scope>PROTEIN SEQUENCE OF 25-41; 50-57; 60-71; 132-142; 169-181; 188-253; 355-367 AND 409-425</scope>
    <scope>X-RAY CRYSTALLOGRAPHY (2.50 ANGSTROMS) OF 107-430</scope>
    <scope>FUNCTION</scope>
    <scope>SUBUNIT</scope>
    <scope>SUBCELLULAR LOCATION</scope>
    <scope>DOMAIN</scope>
    <scope>DISRUPTION PHENOTYPE</scope>
    <scope>TOPOLOGY</scope>
    <scope>MUTAGENESIS OF GLU-122; PHE-126; PHE-127; GLU-135; ARG-181; 257-PRO--GLY-259; 349-PHE--PHE-359 AND LYS-425</scope>
    <source>
        <strain>DSM 29051 / UK4</strain>
    </source>
</reference>
<reference key="4">
    <citation type="journal article" date="2013" name="MicrobiologyOpen">
        <title>Expression of Fap amyloids in Pseudomonas aeruginosa, P. fluorescens, and P. putida results in aggregation and increased biofilm formation.</title>
        <authorList>
            <person name="Dueholm M.S."/>
            <person name="Soendergaard M.T."/>
            <person name="Nilsson M."/>
            <person name="Christiansen G."/>
            <person name="Stensballe A."/>
            <person name="Overgaard M.T."/>
            <person name="Givskov M."/>
            <person name="Tolker-Nielsen T."/>
            <person name="Otzen D.E."/>
            <person name="Nielsen P.H."/>
        </authorList>
    </citation>
    <scope>FUNCTION</scope>
    <scope>POSSIBLE SUBCELLULAR LOCATION</scope>
    <scope>DISRUPTION PHENOTYPE</scope>
    <source>
        <strain>DSM 29051 / UK4</strain>
    </source>
</reference>
<reference key="5">
    <citation type="journal article" date="2015" name="Front. Microbiol.">
        <title>Functional bacterial amyloid increases Pseudomonas biofilm hydrophobicity and stiffness.</title>
        <authorList>
            <person name="Zeng G."/>
            <person name="Vad B.S."/>
            <person name="Dueholm M.S."/>
            <person name="Christiansen G."/>
            <person name="Nilsson M."/>
            <person name="Tolker-Nielsen T."/>
            <person name="Nielsen P.H."/>
            <person name="Meyer R.L."/>
            <person name="Otzen D.E."/>
        </authorList>
    </citation>
    <scope>FUNCTION</scope>
    <scope>DISRUPTION PHENOTYPE</scope>
    <source>
        <strain>DSM 29051 / UK4</strain>
    </source>
</reference>
<reference evidence="18" key="6">
    <citation type="journal article" date="2018" name="J. Mol. Biol.">
        <title>The FapF Amyloid Secretion Transporter Possesses an Atypical Asymmetric Coiled Coil.</title>
        <authorList>
            <person name="Rouse S.L."/>
            <person name="Stylianou F."/>
            <person name="Wu H.Y.G."/>
            <person name="Berry J.L."/>
            <person name="Sewell L."/>
            <person name="Morgan R.M.L."/>
            <person name="Sauerwein A.C."/>
            <person name="Matthews S."/>
        </authorList>
    </citation>
    <scope>X-RAY CRYSTALLOGRAPHY (1.78 ANGSTROMS) OF 27-64</scope>
    <scope>DOMAIN</scope>
    <scope>COILED COIL</scope>
    <scope>MUTAGENESIS OF TYR-44 AND ARG-57</scope>
    <source>
        <strain>DSM 29051 / UK4</strain>
    </source>
</reference>
<accession>P0DXF8</accession>
<name>FAPF_PSEFL</name>
<proteinExistence type="evidence at protein level"/>
<keyword id="KW-0002">3D-structure</keyword>
<keyword id="KW-0998">Cell outer membrane</keyword>
<keyword id="KW-0175">Coiled coil</keyword>
<keyword id="KW-0903">Direct protein sequencing</keyword>
<keyword id="KW-0472">Membrane</keyword>
<keyword id="KW-0653">Protein transport</keyword>
<keyword id="KW-0732">Signal</keyword>
<keyword id="KW-0812">Transmembrane</keyword>
<keyword id="KW-1134">Transmembrane beta strand</keyword>
<keyword id="KW-0813">Transport</keyword>